<feature type="chain" id="PRO_1000049600" description="Apo-citrate lyase phosphoribosyl-dephospho-CoA transferase">
    <location>
        <begin position="1"/>
        <end position="183"/>
    </location>
</feature>
<name>CITX_CITK8</name>
<proteinExistence type="inferred from homology"/>
<reference key="1">
    <citation type="submission" date="2007-08" db="EMBL/GenBank/DDBJ databases">
        <authorList>
            <consortium name="The Citrobacter koseri Genome Sequencing Project"/>
            <person name="McClelland M."/>
            <person name="Sanderson E.K."/>
            <person name="Porwollik S."/>
            <person name="Spieth J."/>
            <person name="Clifton W.S."/>
            <person name="Latreille P."/>
            <person name="Courtney L."/>
            <person name="Wang C."/>
            <person name="Pepin K."/>
            <person name="Bhonagiri V."/>
            <person name="Nash W."/>
            <person name="Johnson M."/>
            <person name="Thiruvilangam P."/>
            <person name="Wilson R."/>
        </authorList>
    </citation>
    <scope>NUCLEOTIDE SEQUENCE [LARGE SCALE GENOMIC DNA]</scope>
    <source>
        <strain>ATCC BAA-895 / CDC 4225-83 / SGSC4696</strain>
    </source>
</reference>
<keyword id="KW-0548">Nucleotidyltransferase</keyword>
<keyword id="KW-1185">Reference proteome</keyword>
<keyword id="KW-0808">Transferase</keyword>
<gene>
    <name evidence="1" type="primary">citX</name>
    <name type="ordered locus">CKO_02545</name>
</gene>
<dbReference type="EC" id="2.7.7.61" evidence="1"/>
<dbReference type="EMBL" id="CP000822">
    <property type="protein sequence ID" value="ABV13654.1"/>
    <property type="molecule type" value="Genomic_DNA"/>
</dbReference>
<dbReference type="RefSeq" id="WP_012133373.1">
    <property type="nucleotide sequence ID" value="NC_009792.1"/>
</dbReference>
<dbReference type="SMR" id="A8AJJ1"/>
<dbReference type="STRING" id="290338.CKO_02545"/>
<dbReference type="GeneID" id="45136419"/>
<dbReference type="KEGG" id="cko:CKO_02545"/>
<dbReference type="HOGENOM" id="CLU_104529_1_1_6"/>
<dbReference type="OrthoDB" id="3196716at2"/>
<dbReference type="Proteomes" id="UP000008148">
    <property type="component" value="Chromosome"/>
</dbReference>
<dbReference type="GO" id="GO:0050519">
    <property type="term" value="F:holo-citrate lyase synthase activity"/>
    <property type="evidence" value="ECO:0007669"/>
    <property type="project" value="UniProtKB-UniRule"/>
</dbReference>
<dbReference type="GO" id="GO:0051191">
    <property type="term" value="P:prosthetic group biosynthetic process"/>
    <property type="evidence" value="ECO:0007669"/>
    <property type="project" value="InterPro"/>
</dbReference>
<dbReference type="HAMAP" id="MF_00398">
    <property type="entry name" value="CitX"/>
    <property type="match status" value="1"/>
</dbReference>
<dbReference type="InterPro" id="IPR005551">
    <property type="entry name" value="CitX"/>
</dbReference>
<dbReference type="NCBIfam" id="TIGR03124">
    <property type="entry name" value="citrate_citX"/>
    <property type="match status" value="1"/>
</dbReference>
<dbReference type="NCBIfam" id="NF002383">
    <property type="entry name" value="PRK01392.1"/>
    <property type="match status" value="1"/>
</dbReference>
<dbReference type="Pfam" id="PF03802">
    <property type="entry name" value="CitX"/>
    <property type="match status" value="1"/>
</dbReference>
<sequence>MHLLPEQATRHAVSIPELLVSRDERQARQHAWLTRHLTPLVSFTVVAPGPIKDSELTRRIFNHGVTALLAVAKKAGWSVREQAALASASGPEGFLAIEAPARDLKLATIELEHQHPLGRLWDIDVLTPEGDILSRRHFSLPARRCLLCEQSAAECARGKTHALSDLLIRMEALLHDADSSHIN</sequence>
<comment type="function">
    <text evidence="1">Transfers 2-(5''-triphosphoribosyl)-3'-dephosphocoenzyme-A on a serine residue to the apo-acyl carrier protein (gamma chain) of the citrate lyase to yield holo-acyl carrier protein.</text>
</comment>
<comment type="catalytic activity">
    <reaction evidence="1">
        <text>apo-[citrate lyase ACP] + 2'-(5''-triphospho-alpha-D-ribosyl)-3'-dephospho-CoA = holo-[citrate lyase ACP] + diphosphate</text>
        <dbReference type="Rhea" id="RHEA:16333"/>
        <dbReference type="Rhea" id="RHEA-COMP:10157"/>
        <dbReference type="Rhea" id="RHEA-COMP:10158"/>
        <dbReference type="ChEBI" id="CHEBI:29999"/>
        <dbReference type="ChEBI" id="CHEBI:33019"/>
        <dbReference type="ChEBI" id="CHEBI:61378"/>
        <dbReference type="ChEBI" id="CHEBI:82683"/>
        <dbReference type="EC" id="2.7.7.61"/>
    </reaction>
</comment>
<comment type="similarity">
    <text evidence="1">Belongs to the CitX family.</text>
</comment>
<accession>A8AJJ1</accession>
<protein>
    <recommendedName>
        <fullName>Apo-citrate lyase phosphoribosyl-dephospho-CoA transferase</fullName>
        <ecNumber evidence="1">2.7.7.61</ecNumber>
    </recommendedName>
    <alternativeName>
        <fullName evidence="1">Apo-ACP nucleodityltransferase</fullName>
    </alternativeName>
    <alternativeName>
        <fullName evidence="1">Holo-ACP synthase</fullName>
    </alternativeName>
    <alternativeName>
        <fullName evidence="1">Holo-citrate lyase synthase</fullName>
    </alternativeName>
</protein>
<evidence type="ECO:0000255" key="1">
    <source>
        <dbReference type="HAMAP-Rule" id="MF_00398"/>
    </source>
</evidence>
<organism>
    <name type="scientific">Citrobacter koseri (strain ATCC BAA-895 / CDC 4225-83 / SGSC4696)</name>
    <dbReference type="NCBI Taxonomy" id="290338"/>
    <lineage>
        <taxon>Bacteria</taxon>
        <taxon>Pseudomonadati</taxon>
        <taxon>Pseudomonadota</taxon>
        <taxon>Gammaproteobacteria</taxon>
        <taxon>Enterobacterales</taxon>
        <taxon>Enterobacteriaceae</taxon>
        <taxon>Citrobacter</taxon>
    </lineage>
</organism>